<keyword id="KW-0002">3D-structure</keyword>
<keyword id="KW-0007">Acetylation</keyword>
<keyword id="KW-0963">Cytoplasm</keyword>
<keyword id="KW-0445">Lipid transport</keyword>
<keyword id="KW-1185">Reference proteome</keyword>
<keyword id="KW-0677">Repeat</keyword>
<keyword id="KW-0813">Transport</keyword>
<dbReference type="EMBL" id="AF209701">
    <property type="protein sequence ID" value="AAF33207.1"/>
    <property type="molecule type" value="mRNA"/>
</dbReference>
<dbReference type="RefSeq" id="NP_786993.1">
    <property type="nucleotide sequence ID" value="NM_175799.3"/>
</dbReference>
<dbReference type="PDB" id="1TFJ">
    <property type="method" value="X-ray"/>
    <property type="resolution" value="1.61 A"/>
    <property type="chains" value="A=2-209"/>
</dbReference>
<dbReference type="PDB" id="1WBE">
    <property type="method" value="X-ray"/>
    <property type="resolution" value="1.36 A"/>
    <property type="chains" value="A=2-209"/>
</dbReference>
<dbReference type="PDB" id="2BV7">
    <property type="method" value="X-ray"/>
    <property type="resolution" value="1.79 A"/>
    <property type="chains" value="A=2-209"/>
</dbReference>
<dbReference type="PDBsum" id="1TFJ"/>
<dbReference type="PDBsum" id="1WBE"/>
<dbReference type="PDBsum" id="2BV7"/>
<dbReference type="SMR" id="P68265"/>
<dbReference type="FunCoup" id="P68265">
    <property type="interactions" value="1791"/>
</dbReference>
<dbReference type="STRING" id="9913.ENSBTAP00000003355"/>
<dbReference type="PaxDb" id="9913-ENSBTAP00000003355"/>
<dbReference type="GeneID" id="327678"/>
<dbReference type="KEGG" id="bta:327678"/>
<dbReference type="CTD" id="51228"/>
<dbReference type="eggNOG" id="KOG3221">
    <property type="taxonomic scope" value="Eukaryota"/>
</dbReference>
<dbReference type="InParanoid" id="P68265"/>
<dbReference type="OrthoDB" id="205255at2759"/>
<dbReference type="EvolutionaryTrace" id="P68265"/>
<dbReference type="Proteomes" id="UP000009136">
    <property type="component" value="Unplaced"/>
</dbReference>
<dbReference type="GO" id="GO:0005829">
    <property type="term" value="C:cytosol"/>
    <property type="evidence" value="ECO:0000318"/>
    <property type="project" value="GO_Central"/>
</dbReference>
<dbReference type="GO" id="GO:1902387">
    <property type="term" value="F:ceramide 1-phosphate binding"/>
    <property type="evidence" value="ECO:0000318"/>
    <property type="project" value="GO_Central"/>
</dbReference>
<dbReference type="GO" id="GO:1902388">
    <property type="term" value="F:ceramide 1-phosphate transfer activity"/>
    <property type="evidence" value="ECO:0000318"/>
    <property type="project" value="GO_Central"/>
</dbReference>
<dbReference type="GO" id="GO:0051861">
    <property type="term" value="F:glycolipid binding"/>
    <property type="evidence" value="ECO:0000250"/>
    <property type="project" value="UniProtKB"/>
</dbReference>
<dbReference type="GO" id="GO:0008289">
    <property type="term" value="F:lipid binding"/>
    <property type="evidence" value="ECO:0000250"/>
    <property type="project" value="UniProtKB"/>
</dbReference>
<dbReference type="GO" id="GO:0120013">
    <property type="term" value="F:lipid transfer activity"/>
    <property type="evidence" value="ECO:0000250"/>
    <property type="project" value="UniProtKB"/>
</dbReference>
<dbReference type="GO" id="GO:0035627">
    <property type="term" value="P:ceramide transport"/>
    <property type="evidence" value="ECO:0000318"/>
    <property type="project" value="GO_Central"/>
</dbReference>
<dbReference type="GO" id="GO:0120009">
    <property type="term" value="P:intermembrane lipid transfer"/>
    <property type="evidence" value="ECO:0000250"/>
    <property type="project" value="UniProtKB"/>
</dbReference>
<dbReference type="FunFam" id="1.10.3520.10:FF:000003">
    <property type="entry name" value="glycolipid transfer protein"/>
    <property type="match status" value="1"/>
</dbReference>
<dbReference type="Gene3D" id="1.10.3520.10">
    <property type="entry name" value="Glycolipid transfer protein"/>
    <property type="match status" value="1"/>
</dbReference>
<dbReference type="InterPro" id="IPR036497">
    <property type="entry name" value="GLTP_sf"/>
</dbReference>
<dbReference type="InterPro" id="IPR014830">
    <property type="entry name" value="Glycolipid_transfer_prot_dom"/>
</dbReference>
<dbReference type="PANTHER" id="PTHR10219:SF97">
    <property type="entry name" value="GLYCOLIPID TRANSFER PROTEIN"/>
    <property type="match status" value="1"/>
</dbReference>
<dbReference type="PANTHER" id="PTHR10219">
    <property type="entry name" value="GLYCOLIPID TRANSFER PROTEIN-RELATED"/>
    <property type="match status" value="1"/>
</dbReference>
<dbReference type="Pfam" id="PF08718">
    <property type="entry name" value="GLTP"/>
    <property type="match status" value="1"/>
</dbReference>
<dbReference type="SUPFAM" id="SSF110004">
    <property type="entry name" value="Glycolipid transfer protein, GLTP"/>
    <property type="match status" value="1"/>
</dbReference>
<accession>P68265</accession>
<accession>P17403</accession>
<accession>Q9MYP3</accession>
<protein>
    <recommendedName>
        <fullName>Glycolipid transfer protein</fullName>
        <shortName>GLTP</shortName>
    </recommendedName>
</protein>
<comment type="function">
    <text evidence="4 5">Accelerates the intermembrane transfer of various glycolipids. Catalyzes the transfer of various glycosphingolipids between membranes but does not catalyze the transfer of phospholipids. May be involved in the intracellular translocation of glucosylceramides.</text>
</comment>
<comment type="subunit">
    <text evidence="5">Monomer.</text>
</comment>
<comment type="subcellular location">
    <subcellularLocation>
        <location evidence="1">Cytoplasm</location>
    </subcellularLocation>
</comment>
<comment type="tissue specificity">
    <text evidence="4">Detected in brain, kidney, spleen, lung, cerebellum, liver and heart.</text>
</comment>
<comment type="similarity">
    <text evidence="6">Belongs to the GLTP family.</text>
</comment>
<sequence length="209" mass="23922">MALLAEHLLRPLPADKQIETGPFLEAVSHLPPFFDCLGSPVFTPIKADISGNITKIKAVYDTNPTKFRTLQNILEVEKEMYGAEWPKVGATLALMWLKRGLRFIQVFLQSICDGERDENHPNLIRVNATKAYEMALKKYHGWIVQKIFQAALYAAPYKSDFLKALSKGQNVTEEECLEKVRLFLVNYTATIDVIYEMYTRMNAELNYKV</sequence>
<feature type="initiator methionine" description="Removed" evidence="2">
    <location>
        <position position="1"/>
    </location>
</feature>
<feature type="chain" id="PRO_0000148914" description="Glycolipid transfer protein">
    <location>
        <begin position="2"/>
        <end position="209"/>
    </location>
</feature>
<feature type="repeat" description="1">
    <location>
        <begin position="45"/>
        <end position="55"/>
    </location>
</feature>
<feature type="repeat" description="2">
    <location>
        <begin position="56"/>
        <end position="66"/>
    </location>
</feature>
<feature type="region of interest" description="2 X 12 AA approximate tandem repeats">
    <location>
        <begin position="45"/>
        <end position="66"/>
    </location>
</feature>
<feature type="binding site" evidence="3">
    <location>
        <begin position="48"/>
        <end position="55"/>
    </location>
    <ligand>
        <name>beta-D-galactosyl-(1-&gt;4)-beta-D-glucosyl-(1&lt;-&gt;1)-N-[(9Z)-octadecenoyl]-sphing-4-enine</name>
        <dbReference type="ChEBI" id="CHEBI:131557"/>
    </ligand>
</feature>
<feature type="binding site" evidence="5 7">
    <location>
        <position position="48"/>
    </location>
    <ligand>
        <name>a ganglioside GM3 (d18:1(4E))</name>
        <dbReference type="ChEBI" id="CHEBI:60065"/>
    </ligand>
</feature>
<feature type="binding site" evidence="5 7">
    <location>
        <position position="52"/>
    </location>
    <ligand>
        <name>a ganglioside GM3 (d18:1(4E))</name>
        <dbReference type="ChEBI" id="CHEBI:60065"/>
    </ligand>
</feature>
<feature type="binding site" evidence="5 7">
    <location>
        <position position="140"/>
    </location>
    <ligand>
        <name>a ganglioside GM3 (d18:1(4E))</name>
        <dbReference type="ChEBI" id="CHEBI:60065"/>
    </ligand>
</feature>
<feature type="binding site" evidence="3">
    <location>
        <position position="140"/>
    </location>
    <ligand>
        <name>beta-D-galactosyl-(1-&gt;4)-beta-D-glucosyl-(1&lt;-&gt;1)-N-[(9Z)-octadecenoyl]-sphing-4-enine</name>
        <dbReference type="ChEBI" id="CHEBI:131557"/>
    </ligand>
</feature>
<feature type="binding site" evidence="5 7">
    <location>
        <position position="207"/>
    </location>
    <ligand>
        <name>a ganglioside GM3 (d18:1(4E))</name>
        <dbReference type="ChEBI" id="CHEBI:60065"/>
    </ligand>
</feature>
<feature type="binding site" evidence="3">
    <location>
        <position position="207"/>
    </location>
    <ligand>
        <name>beta-D-galactosyl-(1-&gt;4)-beta-D-glucosyl-(1&lt;-&gt;1)-N-[(9Z)-octadecenoyl]-sphing-4-enine</name>
        <dbReference type="ChEBI" id="CHEBI:131557"/>
    </ligand>
</feature>
<feature type="modified residue" description="N-acetylalanine" evidence="2">
    <location>
        <position position="2"/>
    </location>
</feature>
<feature type="helix" evidence="9">
    <location>
        <begin position="20"/>
        <end position="27"/>
    </location>
</feature>
<feature type="helix" evidence="9">
    <location>
        <begin position="31"/>
        <end position="35"/>
    </location>
</feature>
<feature type="helix" evidence="8">
    <location>
        <begin position="40"/>
        <end position="42"/>
    </location>
</feature>
<feature type="helix" evidence="9">
    <location>
        <begin position="43"/>
        <end position="62"/>
    </location>
</feature>
<feature type="turn" evidence="9">
    <location>
        <begin position="64"/>
        <end position="67"/>
    </location>
</feature>
<feature type="helix" evidence="9">
    <location>
        <begin position="70"/>
        <end position="81"/>
    </location>
</feature>
<feature type="helix" evidence="9">
    <location>
        <begin position="82"/>
        <end position="84"/>
    </location>
</feature>
<feature type="helix" evidence="9">
    <location>
        <begin position="89"/>
        <end position="112"/>
    </location>
</feature>
<feature type="helix" evidence="9">
    <location>
        <begin position="125"/>
        <end position="135"/>
    </location>
</feature>
<feature type="helix" evidence="9">
    <location>
        <begin position="137"/>
        <end position="139"/>
    </location>
</feature>
<feature type="helix" evidence="9">
    <location>
        <begin position="142"/>
        <end position="153"/>
    </location>
</feature>
<feature type="helix" evidence="9">
    <location>
        <begin position="158"/>
        <end position="165"/>
    </location>
</feature>
<feature type="turn" evidence="9">
    <location>
        <begin position="166"/>
        <end position="168"/>
    </location>
</feature>
<feature type="helix" evidence="9">
    <location>
        <begin position="173"/>
        <end position="200"/>
    </location>
</feature>
<organism>
    <name type="scientific">Bos taurus</name>
    <name type="common">Bovine</name>
    <dbReference type="NCBI Taxonomy" id="9913"/>
    <lineage>
        <taxon>Eukaryota</taxon>
        <taxon>Metazoa</taxon>
        <taxon>Chordata</taxon>
        <taxon>Craniata</taxon>
        <taxon>Vertebrata</taxon>
        <taxon>Euteleostomi</taxon>
        <taxon>Mammalia</taxon>
        <taxon>Eutheria</taxon>
        <taxon>Laurasiatheria</taxon>
        <taxon>Artiodactyla</taxon>
        <taxon>Ruminantia</taxon>
        <taxon>Pecora</taxon>
        <taxon>Bovidae</taxon>
        <taxon>Bovinae</taxon>
        <taxon>Bos</taxon>
    </lineage>
</organism>
<proteinExistence type="evidence at protein level"/>
<gene>
    <name type="primary">GLTP</name>
</gene>
<evidence type="ECO:0000250" key="1"/>
<evidence type="ECO:0000250" key="2">
    <source>
        <dbReference type="UniProtKB" id="P68266"/>
    </source>
</evidence>
<evidence type="ECO:0000250" key="3">
    <source>
        <dbReference type="UniProtKB" id="Q9NZD2"/>
    </source>
</evidence>
<evidence type="ECO:0000269" key="4">
    <source>
    </source>
</evidence>
<evidence type="ECO:0000269" key="5">
    <source>
    </source>
</evidence>
<evidence type="ECO:0000305" key="6"/>
<evidence type="ECO:0007744" key="7">
    <source>
        <dbReference type="PDB" id="2BV7"/>
    </source>
</evidence>
<evidence type="ECO:0007829" key="8">
    <source>
        <dbReference type="PDB" id="1TFJ"/>
    </source>
</evidence>
<evidence type="ECO:0007829" key="9">
    <source>
        <dbReference type="PDB" id="1WBE"/>
    </source>
</evidence>
<reference key="1">
    <citation type="journal article" date="2000" name="J. Biol. Chem.">
        <title>Cloning and expression of glycolipid transfer protein from bovine and porcine brain.</title>
        <authorList>
            <person name="Lin X."/>
            <person name="Mattjus P."/>
            <person name="Pike H.M."/>
            <person name="Windebank A.J."/>
            <person name="Brown R.E."/>
        </authorList>
    </citation>
    <scope>NUCLEOTIDE SEQUENCE [MRNA]</scope>
    <scope>FUNCTION</scope>
    <scope>TISSUE SPECIFICITY</scope>
    <source>
        <tissue>Brain</tissue>
    </source>
</reference>
<reference key="2">
    <citation type="journal article" date="2006" name="J. Mol. Biol.">
        <title>Structural evidence for adaptive ligand binding of glycolipid transfer protein.</title>
        <authorList>
            <person name="Airenne T.T."/>
            <person name="Kidron H."/>
            <person name="Nymalm Y."/>
            <person name="Nylund M."/>
            <person name="West G."/>
            <person name="Mattjus P."/>
            <person name="Salminen T.A."/>
        </authorList>
    </citation>
    <scope>X-RAY CRYSTALLOGRAPHY (1.4 ANGSTROMS) OF APOENZYME AND IN COMPLEXES WITH GANGLIOSIDE GM3 AND FATTY ACID</scope>
    <scope>FUNCTION</scope>
    <scope>SUBUNIT</scope>
</reference>
<name>GLTP_BOVIN</name>